<gene>
    <name evidence="2" type="primary">LYS5</name>
    <name type="ordered locus">YALI0B15444g</name>
</gene>
<proteinExistence type="inferred from homology"/>
<feature type="chain" id="PRO_0000199015" description="Saccharopine dehydrogenase [NAD(+), L-lysine-forming]">
    <location>
        <begin position="1"/>
        <end position="369"/>
    </location>
</feature>
<feature type="active site" description="Proton acceptor" evidence="1">
    <location>
        <position position="78"/>
    </location>
</feature>
<feature type="active site" description="Proton donor" evidence="1">
    <location>
        <position position="96"/>
    </location>
</feature>
<feature type="binding site" evidence="1">
    <location>
        <position position="19"/>
    </location>
    <ligand>
        <name>L-saccharopine</name>
        <dbReference type="ChEBI" id="CHEBI:57951"/>
    </ligand>
</feature>
<feature type="binding site" evidence="1">
    <location>
        <position position="78"/>
    </location>
    <ligand>
        <name>L-saccharopine</name>
        <dbReference type="ChEBI" id="CHEBI:57951"/>
    </ligand>
</feature>
<feature type="binding site" evidence="1">
    <location>
        <position position="101"/>
    </location>
    <ligand>
        <name>L-saccharopine</name>
        <dbReference type="ChEBI" id="CHEBI:57951"/>
    </ligand>
</feature>
<feature type="binding site" evidence="1">
    <location>
        <position position="130"/>
    </location>
    <ligand>
        <name>NAD(+)</name>
        <dbReference type="ChEBI" id="CHEBI:57540"/>
    </ligand>
</feature>
<feature type="binding site" evidence="1">
    <location>
        <position position="131"/>
    </location>
    <ligand>
        <name>L-saccharopine</name>
        <dbReference type="ChEBI" id="CHEBI:57951"/>
    </ligand>
</feature>
<feature type="binding site" evidence="1">
    <location>
        <position position="135"/>
    </location>
    <ligand>
        <name>L-saccharopine</name>
        <dbReference type="ChEBI" id="CHEBI:57951"/>
    </ligand>
</feature>
<feature type="binding site" evidence="1">
    <location>
        <begin position="203"/>
        <end position="204"/>
    </location>
    <ligand>
        <name>NAD(+)</name>
        <dbReference type="ChEBI" id="CHEBI:57540"/>
    </ligand>
</feature>
<feature type="binding site" evidence="1">
    <location>
        <position position="227"/>
    </location>
    <ligand>
        <name>NAD(+)</name>
        <dbReference type="ChEBI" id="CHEBI:57540"/>
    </ligand>
</feature>
<feature type="binding site" evidence="1">
    <location>
        <position position="231"/>
    </location>
    <ligand>
        <name>NAD(+)</name>
        <dbReference type="ChEBI" id="CHEBI:57540"/>
    </ligand>
</feature>
<feature type="binding site" evidence="1">
    <location>
        <position position="251"/>
    </location>
    <ligand>
        <name>NAD(+)</name>
        <dbReference type="ChEBI" id="CHEBI:57540"/>
    </ligand>
</feature>
<feature type="binding site" evidence="1">
    <location>
        <position position="278"/>
    </location>
    <ligand>
        <name>NAD(+)</name>
        <dbReference type="ChEBI" id="CHEBI:57540"/>
    </ligand>
</feature>
<feature type="binding site" evidence="1">
    <location>
        <begin position="279"/>
        <end position="281"/>
    </location>
    <ligand>
        <name>L-saccharopine</name>
        <dbReference type="ChEBI" id="CHEBI:57951"/>
    </ligand>
</feature>
<feature type="binding site" evidence="1">
    <location>
        <begin position="318"/>
        <end position="321"/>
    </location>
    <ligand>
        <name>NAD(+)</name>
        <dbReference type="ChEBI" id="CHEBI:57540"/>
    </ligand>
</feature>
<feature type="disulfide bond" evidence="1">
    <location>
        <begin position="205"/>
        <end position="249"/>
    </location>
</feature>
<organism>
    <name type="scientific">Yarrowia lipolytica (strain CLIB 122 / E 150)</name>
    <name type="common">Yeast</name>
    <name type="synonym">Candida lipolytica</name>
    <dbReference type="NCBI Taxonomy" id="284591"/>
    <lineage>
        <taxon>Eukaryota</taxon>
        <taxon>Fungi</taxon>
        <taxon>Dikarya</taxon>
        <taxon>Ascomycota</taxon>
        <taxon>Saccharomycotina</taxon>
        <taxon>Dipodascomycetes</taxon>
        <taxon>Dipodascales</taxon>
        <taxon>Dipodascales incertae sedis</taxon>
        <taxon>Yarrowia</taxon>
    </lineage>
</organism>
<protein>
    <recommendedName>
        <fullName>Saccharopine dehydrogenase [NAD(+), L-lysine-forming]</fullName>
        <shortName>SDH</shortName>
        <ecNumber>1.5.1.7</ecNumber>
    </recommendedName>
    <alternativeName>
        <fullName>Lysine--2-oxoglutarate reductase</fullName>
    </alternativeName>
</protein>
<sequence length="369" mass="40612">MTAPVKLHLRAETKPLEHRSALTPTTTRKLLDAGFEVFVEKSPLRIFDDQEFVDVGATLVEEGSWVSAPEDRMIIGLKELPEESFPLSHEHIQFAHCYKDQGGWKDVLSRFPAGNGTLYDLEFLEDDNGRRVAAFGFHAGFAGAAIGVETWAFQQTHPDSENLPGVSAYPNETELVDKIKKDLAAAVEKGSKLPTVLVIGALGRCGSGAIDLARKVGIPEENIIRWDMNETKKGGPFQEIADADIFINCIYLSQPIPPFINYDLLNKETRKLSVIVDVSADTTNPHNPVPVYTIATTFDHPTVPVETTAGPKLSVCSIDHLPSLLPREASEAFSEALLPSLLQLPQRDTAPVWTRAKALFDKHVLRIGE</sequence>
<accession>P38997</accession>
<comment type="function">
    <text evidence="1">Catalyzes the NAD(+)-dependent cleavage of saccharopine to L-lysine and 2-oxoglutarate, the final step in the alpha-aminoadipate (AAA) pathway for lysin biosynthesis.</text>
</comment>
<comment type="catalytic activity">
    <reaction evidence="1">
        <text>L-saccharopine + NAD(+) + H2O = L-lysine + 2-oxoglutarate + NADH + H(+)</text>
        <dbReference type="Rhea" id="RHEA:12440"/>
        <dbReference type="ChEBI" id="CHEBI:15377"/>
        <dbReference type="ChEBI" id="CHEBI:15378"/>
        <dbReference type="ChEBI" id="CHEBI:16810"/>
        <dbReference type="ChEBI" id="CHEBI:32551"/>
        <dbReference type="ChEBI" id="CHEBI:57540"/>
        <dbReference type="ChEBI" id="CHEBI:57945"/>
        <dbReference type="ChEBI" id="CHEBI:57951"/>
        <dbReference type="EC" id="1.5.1.7"/>
    </reaction>
</comment>
<comment type="pathway">
    <text evidence="4">Amino-acid biosynthesis; L-lysine biosynthesis via AAA pathway; L-lysine from L-alpha-aminoadipate (fungal route): step 3/3.</text>
</comment>
<comment type="subunit">
    <text evidence="1">Monomer.</text>
</comment>
<comment type="similarity">
    <text evidence="3">Belongs to the AlaDH/PNT family.</text>
</comment>
<dbReference type="EC" id="1.5.1.7"/>
<dbReference type="EMBL" id="M34929">
    <property type="protein sequence ID" value="AAA35248.1"/>
    <property type="molecule type" value="Genomic_DNA"/>
</dbReference>
<dbReference type="EMBL" id="CR382128">
    <property type="protein sequence ID" value="CAG83182.1"/>
    <property type="molecule type" value="Genomic_DNA"/>
</dbReference>
<dbReference type="PIR" id="A36467">
    <property type="entry name" value="A36467"/>
</dbReference>
<dbReference type="RefSeq" id="XP_500931.1">
    <property type="nucleotide sequence ID" value="XM_500931.1"/>
</dbReference>
<dbReference type="SMR" id="P38997"/>
<dbReference type="FunCoup" id="P38997">
    <property type="interactions" value="199"/>
</dbReference>
<dbReference type="STRING" id="284591.P38997"/>
<dbReference type="EnsemblFungi" id="CAG83182">
    <property type="protein sequence ID" value="CAG83182"/>
    <property type="gene ID" value="YALI0_B15444g"/>
</dbReference>
<dbReference type="KEGG" id="yli:2907616"/>
<dbReference type="VEuPathDB" id="FungiDB:YALI0_B15444g"/>
<dbReference type="HOGENOM" id="CLU_063085_0_0_1"/>
<dbReference type="InParanoid" id="P38997"/>
<dbReference type="OMA" id="YFFFSHT"/>
<dbReference type="OrthoDB" id="104843at4891"/>
<dbReference type="UniPathway" id="UPA00033">
    <property type="reaction ID" value="UER00034"/>
</dbReference>
<dbReference type="Proteomes" id="UP000001300">
    <property type="component" value="Chromosome B"/>
</dbReference>
<dbReference type="GO" id="GO:0005737">
    <property type="term" value="C:cytoplasm"/>
    <property type="evidence" value="ECO:0000318"/>
    <property type="project" value="GO_Central"/>
</dbReference>
<dbReference type="GO" id="GO:0004754">
    <property type="term" value="F:saccharopine dehydrogenase (NAD+, L-lysine-forming) activity"/>
    <property type="evidence" value="ECO:0007669"/>
    <property type="project" value="UniProtKB-EC"/>
</dbReference>
<dbReference type="GO" id="GO:0004753">
    <property type="term" value="F:saccharopine dehydrogenase activity"/>
    <property type="evidence" value="ECO:0000318"/>
    <property type="project" value="GO_Central"/>
</dbReference>
<dbReference type="GO" id="GO:0019878">
    <property type="term" value="P:lysine biosynthetic process via aminoadipic acid"/>
    <property type="evidence" value="ECO:0000318"/>
    <property type="project" value="GO_Central"/>
</dbReference>
<dbReference type="CDD" id="cd12188">
    <property type="entry name" value="SDH"/>
    <property type="match status" value="1"/>
</dbReference>
<dbReference type="FunFam" id="3.40.50.720:FF:000217">
    <property type="entry name" value="Saccharopine dehydrogenase [NAD(+), L-lysine-forming]"/>
    <property type="match status" value="1"/>
</dbReference>
<dbReference type="FunFam" id="3.40.50.720:FF:000423">
    <property type="entry name" value="Saccharopine dehydrogenase [NAD(+), L-lysine-forming]"/>
    <property type="match status" value="1"/>
</dbReference>
<dbReference type="Gene3D" id="3.40.50.720">
    <property type="entry name" value="NAD(P)-binding Rossmann-like Domain"/>
    <property type="match status" value="2"/>
</dbReference>
<dbReference type="InterPro" id="IPR051168">
    <property type="entry name" value="AASS"/>
</dbReference>
<dbReference type="InterPro" id="IPR007886">
    <property type="entry name" value="AlaDH/PNT_N"/>
</dbReference>
<dbReference type="InterPro" id="IPR007698">
    <property type="entry name" value="AlaDH/PNT_NAD(H)-bd"/>
</dbReference>
<dbReference type="InterPro" id="IPR027281">
    <property type="entry name" value="Lys1"/>
</dbReference>
<dbReference type="InterPro" id="IPR036291">
    <property type="entry name" value="NAD(P)-bd_dom_sf"/>
</dbReference>
<dbReference type="PANTHER" id="PTHR11133">
    <property type="entry name" value="SACCHAROPINE DEHYDROGENASE"/>
    <property type="match status" value="1"/>
</dbReference>
<dbReference type="PANTHER" id="PTHR11133:SF23">
    <property type="entry name" value="SACCHAROPINE DEHYDROGENASE [NAD(+), L-LYSINE-FORMING]"/>
    <property type="match status" value="1"/>
</dbReference>
<dbReference type="Pfam" id="PF01262">
    <property type="entry name" value="AlaDh_PNT_C"/>
    <property type="match status" value="1"/>
</dbReference>
<dbReference type="Pfam" id="PF05222">
    <property type="entry name" value="AlaDh_PNT_N"/>
    <property type="match status" value="1"/>
</dbReference>
<dbReference type="PIRSF" id="PIRSF018250">
    <property type="entry name" value="Saccharopine_DH_Lys"/>
    <property type="match status" value="1"/>
</dbReference>
<dbReference type="SMART" id="SM01002">
    <property type="entry name" value="AlaDh_PNT_C"/>
    <property type="match status" value="1"/>
</dbReference>
<dbReference type="SMART" id="SM01003">
    <property type="entry name" value="AlaDh_PNT_N"/>
    <property type="match status" value="1"/>
</dbReference>
<dbReference type="SUPFAM" id="SSF52283">
    <property type="entry name" value="Formate/glycerate dehydrogenase catalytic domain-like"/>
    <property type="match status" value="1"/>
</dbReference>
<dbReference type="SUPFAM" id="SSF51735">
    <property type="entry name" value="NAD(P)-binding Rossmann-fold domains"/>
    <property type="match status" value="1"/>
</dbReference>
<reference key="1">
    <citation type="journal article" date="1990" name="Mol. Cell. Biol.">
        <title>Overlapping reading frames at the LYS5 locus in the yeast Yarrowia lipolytica.</title>
        <authorList>
            <person name="Xuan J.-W."/>
            <person name="Fournier P."/>
            <person name="Declerck N."/>
            <person name="Chasles M."/>
            <person name="Gaillardin C."/>
        </authorList>
    </citation>
    <scope>NUCLEOTIDE SEQUENCE [GENOMIC DNA]</scope>
    <source>
        <strain>ATCC 20460 / W29 / CBS 7504 / IFP29</strain>
    </source>
</reference>
<reference key="2">
    <citation type="journal article" date="2004" name="Nature">
        <title>Genome evolution in yeasts.</title>
        <authorList>
            <person name="Dujon B."/>
            <person name="Sherman D."/>
            <person name="Fischer G."/>
            <person name="Durrens P."/>
            <person name="Casaregola S."/>
            <person name="Lafontaine I."/>
            <person name="de Montigny J."/>
            <person name="Marck C."/>
            <person name="Neuveglise C."/>
            <person name="Talla E."/>
            <person name="Goffard N."/>
            <person name="Frangeul L."/>
            <person name="Aigle M."/>
            <person name="Anthouard V."/>
            <person name="Babour A."/>
            <person name="Barbe V."/>
            <person name="Barnay S."/>
            <person name="Blanchin S."/>
            <person name="Beckerich J.-M."/>
            <person name="Beyne E."/>
            <person name="Bleykasten C."/>
            <person name="Boisrame A."/>
            <person name="Boyer J."/>
            <person name="Cattolico L."/>
            <person name="Confanioleri F."/>
            <person name="de Daruvar A."/>
            <person name="Despons L."/>
            <person name="Fabre E."/>
            <person name="Fairhead C."/>
            <person name="Ferry-Dumazet H."/>
            <person name="Groppi A."/>
            <person name="Hantraye F."/>
            <person name="Hennequin C."/>
            <person name="Jauniaux N."/>
            <person name="Joyet P."/>
            <person name="Kachouri R."/>
            <person name="Kerrest A."/>
            <person name="Koszul R."/>
            <person name="Lemaire M."/>
            <person name="Lesur I."/>
            <person name="Ma L."/>
            <person name="Muller H."/>
            <person name="Nicaud J.-M."/>
            <person name="Nikolski M."/>
            <person name="Oztas S."/>
            <person name="Ozier-Kalogeropoulos O."/>
            <person name="Pellenz S."/>
            <person name="Potier S."/>
            <person name="Richard G.-F."/>
            <person name="Straub M.-L."/>
            <person name="Suleau A."/>
            <person name="Swennen D."/>
            <person name="Tekaia F."/>
            <person name="Wesolowski-Louvel M."/>
            <person name="Westhof E."/>
            <person name="Wirth B."/>
            <person name="Zeniou-Meyer M."/>
            <person name="Zivanovic Y."/>
            <person name="Bolotin-Fukuhara M."/>
            <person name="Thierry A."/>
            <person name="Bouchier C."/>
            <person name="Caudron B."/>
            <person name="Scarpelli C."/>
            <person name="Gaillardin C."/>
            <person name="Weissenbach J."/>
            <person name="Wincker P."/>
            <person name="Souciet J.-L."/>
        </authorList>
    </citation>
    <scope>NUCLEOTIDE SEQUENCE [LARGE SCALE GENOMIC DNA]</scope>
    <source>
        <strain>CLIB 122 / E 150</strain>
    </source>
</reference>
<evidence type="ECO:0000250" key="1">
    <source>
        <dbReference type="UniProtKB" id="P38998"/>
    </source>
</evidence>
<evidence type="ECO:0000303" key="2">
    <source>
    </source>
</evidence>
<evidence type="ECO:0000305" key="3"/>
<evidence type="ECO:0000305" key="4">
    <source>
    </source>
</evidence>
<name>LYS1_YARLI</name>
<keyword id="KW-0028">Amino-acid biosynthesis</keyword>
<keyword id="KW-1015">Disulfide bond</keyword>
<keyword id="KW-0457">Lysine biosynthesis</keyword>
<keyword id="KW-0520">NAD</keyword>
<keyword id="KW-0560">Oxidoreductase</keyword>
<keyword id="KW-1185">Reference proteome</keyword>